<accession>Q9PK40</accession>
<dbReference type="EC" id="2.1.1.182" evidence="1"/>
<dbReference type="EMBL" id="AE002160">
    <property type="protein sequence ID" value="AAF39462.1"/>
    <property type="molecule type" value="Genomic_DNA"/>
</dbReference>
<dbReference type="PIR" id="D81680">
    <property type="entry name" value="D81680"/>
</dbReference>
<dbReference type="RefSeq" id="WP_010231074.1">
    <property type="nucleotide sequence ID" value="NZ_CP063055.1"/>
</dbReference>
<dbReference type="SMR" id="Q9PK40"/>
<dbReference type="GeneID" id="1245993"/>
<dbReference type="KEGG" id="cmu:TC_0633"/>
<dbReference type="eggNOG" id="COG0030">
    <property type="taxonomic scope" value="Bacteria"/>
</dbReference>
<dbReference type="HOGENOM" id="CLU_041220_0_0_0"/>
<dbReference type="OrthoDB" id="9814755at2"/>
<dbReference type="Proteomes" id="UP000000800">
    <property type="component" value="Chromosome"/>
</dbReference>
<dbReference type="GO" id="GO:0005829">
    <property type="term" value="C:cytosol"/>
    <property type="evidence" value="ECO:0007669"/>
    <property type="project" value="TreeGrafter"/>
</dbReference>
<dbReference type="GO" id="GO:0052908">
    <property type="term" value="F:16S rRNA (adenine(1518)-N(6)/adenine(1519)-N(6))-dimethyltransferase activity"/>
    <property type="evidence" value="ECO:0007669"/>
    <property type="project" value="UniProtKB-EC"/>
</dbReference>
<dbReference type="GO" id="GO:0003723">
    <property type="term" value="F:RNA binding"/>
    <property type="evidence" value="ECO:0007669"/>
    <property type="project" value="UniProtKB-KW"/>
</dbReference>
<dbReference type="CDD" id="cd02440">
    <property type="entry name" value="AdoMet_MTases"/>
    <property type="match status" value="1"/>
</dbReference>
<dbReference type="FunFam" id="3.40.50.150:FF:000594">
    <property type="entry name" value="Ribosomal RNA small subunit methyltransferase A"/>
    <property type="match status" value="1"/>
</dbReference>
<dbReference type="Gene3D" id="1.10.8.100">
    <property type="entry name" value="Ribosomal RNA adenine dimethylase-like, domain 2"/>
    <property type="match status" value="1"/>
</dbReference>
<dbReference type="Gene3D" id="3.40.50.150">
    <property type="entry name" value="Vaccinia Virus protein VP39"/>
    <property type="match status" value="1"/>
</dbReference>
<dbReference type="HAMAP" id="MF_00607">
    <property type="entry name" value="16SrRNA_methyltr_A"/>
    <property type="match status" value="1"/>
</dbReference>
<dbReference type="InterPro" id="IPR001737">
    <property type="entry name" value="KsgA/Erm"/>
</dbReference>
<dbReference type="InterPro" id="IPR023165">
    <property type="entry name" value="rRNA_Ade_diMease-like_C"/>
</dbReference>
<dbReference type="InterPro" id="IPR020596">
    <property type="entry name" value="rRNA_Ade_Mease_Trfase_CS"/>
</dbReference>
<dbReference type="InterPro" id="IPR020598">
    <property type="entry name" value="rRNA_Ade_methylase_Trfase_N"/>
</dbReference>
<dbReference type="InterPro" id="IPR011530">
    <property type="entry name" value="rRNA_adenine_dimethylase"/>
</dbReference>
<dbReference type="InterPro" id="IPR029063">
    <property type="entry name" value="SAM-dependent_MTases_sf"/>
</dbReference>
<dbReference type="NCBIfam" id="TIGR00755">
    <property type="entry name" value="ksgA"/>
    <property type="match status" value="1"/>
</dbReference>
<dbReference type="PANTHER" id="PTHR11727">
    <property type="entry name" value="DIMETHYLADENOSINE TRANSFERASE"/>
    <property type="match status" value="1"/>
</dbReference>
<dbReference type="PANTHER" id="PTHR11727:SF7">
    <property type="entry name" value="DIMETHYLADENOSINE TRANSFERASE-RELATED"/>
    <property type="match status" value="1"/>
</dbReference>
<dbReference type="Pfam" id="PF00398">
    <property type="entry name" value="RrnaAD"/>
    <property type="match status" value="1"/>
</dbReference>
<dbReference type="SMART" id="SM00650">
    <property type="entry name" value="rADc"/>
    <property type="match status" value="1"/>
</dbReference>
<dbReference type="SUPFAM" id="SSF53335">
    <property type="entry name" value="S-adenosyl-L-methionine-dependent methyltransferases"/>
    <property type="match status" value="1"/>
</dbReference>
<dbReference type="PROSITE" id="PS01131">
    <property type="entry name" value="RRNA_A_DIMETH"/>
    <property type="match status" value="1"/>
</dbReference>
<dbReference type="PROSITE" id="PS51689">
    <property type="entry name" value="SAM_RNA_A_N6_MT"/>
    <property type="match status" value="1"/>
</dbReference>
<name>RSMA_CHLMU</name>
<evidence type="ECO:0000255" key="1">
    <source>
        <dbReference type="HAMAP-Rule" id="MF_00607"/>
    </source>
</evidence>
<comment type="function">
    <text evidence="1">Specifically dimethylates two adjacent adenosines (A1518 and A1519) in the loop of a conserved hairpin near the 3'-end of 16S rRNA in the 30S particle. May play a critical role in biogenesis of 30S subunits.</text>
</comment>
<comment type="catalytic activity">
    <reaction evidence="1">
        <text>adenosine(1518)/adenosine(1519) in 16S rRNA + 4 S-adenosyl-L-methionine = N(6)-dimethyladenosine(1518)/N(6)-dimethyladenosine(1519) in 16S rRNA + 4 S-adenosyl-L-homocysteine + 4 H(+)</text>
        <dbReference type="Rhea" id="RHEA:19609"/>
        <dbReference type="Rhea" id="RHEA-COMP:10232"/>
        <dbReference type="Rhea" id="RHEA-COMP:10233"/>
        <dbReference type="ChEBI" id="CHEBI:15378"/>
        <dbReference type="ChEBI" id="CHEBI:57856"/>
        <dbReference type="ChEBI" id="CHEBI:59789"/>
        <dbReference type="ChEBI" id="CHEBI:74411"/>
        <dbReference type="ChEBI" id="CHEBI:74493"/>
        <dbReference type="EC" id="2.1.1.182"/>
    </reaction>
</comment>
<comment type="subcellular location">
    <subcellularLocation>
        <location evidence="1">Cytoplasm</location>
    </subcellularLocation>
</comment>
<comment type="similarity">
    <text evidence="1">Belongs to the class I-like SAM-binding methyltransferase superfamily. rRNA adenine N(6)-methyltransferase family. RsmA subfamily.</text>
</comment>
<keyword id="KW-0963">Cytoplasm</keyword>
<keyword id="KW-0489">Methyltransferase</keyword>
<keyword id="KW-0694">RNA-binding</keyword>
<keyword id="KW-0698">rRNA processing</keyword>
<keyword id="KW-0949">S-adenosyl-L-methionine</keyword>
<keyword id="KW-0808">Transferase</keyword>
<reference key="1">
    <citation type="journal article" date="2000" name="Nucleic Acids Res.">
        <title>Genome sequences of Chlamydia trachomatis MoPn and Chlamydia pneumoniae AR39.</title>
        <authorList>
            <person name="Read T.D."/>
            <person name="Brunham R.C."/>
            <person name="Shen C."/>
            <person name="Gill S.R."/>
            <person name="Heidelberg J.F."/>
            <person name="White O."/>
            <person name="Hickey E.K."/>
            <person name="Peterson J.D."/>
            <person name="Utterback T.R."/>
            <person name="Berry K.J."/>
            <person name="Bass S."/>
            <person name="Linher K.D."/>
            <person name="Weidman J.F."/>
            <person name="Khouri H.M."/>
            <person name="Craven B."/>
            <person name="Bowman C."/>
            <person name="Dodson R.J."/>
            <person name="Gwinn M.L."/>
            <person name="Nelson W.C."/>
            <person name="DeBoy R.T."/>
            <person name="Kolonay J.F."/>
            <person name="McClarty G."/>
            <person name="Salzberg S.L."/>
            <person name="Eisen J.A."/>
            <person name="Fraser C.M."/>
        </authorList>
    </citation>
    <scope>NUCLEOTIDE SEQUENCE [LARGE SCALE GENOMIC DNA]</scope>
    <source>
        <strain>MoPn / Nigg</strain>
    </source>
</reference>
<gene>
    <name evidence="1" type="primary">rsmA</name>
    <name evidence="1" type="synonym">ksgA</name>
    <name type="ordered locus">TC_0633</name>
</gene>
<protein>
    <recommendedName>
        <fullName evidence="1">Ribosomal RNA small subunit methyltransferase A</fullName>
        <ecNumber evidence="1">2.1.1.182</ecNumber>
    </recommendedName>
    <alternativeName>
        <fullName evidence="1">16S rRNA (adenine(1518)-N(6)/adenine(1519)-N(6))-dimethyltransferase</fullName>
    </alternativeName>
    <alternativeName>
        <fullName evidence="1">16S rRNA dimethyladenosine transferase</fullName>
    </alternativeName>
    <alternativeName>
        <fullName evidence="1">16S rRNA dimethylase</fullName>
    </alternativeName>
    <alternativeName>
        <fullName evidence="1">S-adenosylmethionine-6-N', N'-adenosyl(rRNA) dimethyltransferase</fullName>
    </alternativeName>
</protein>
<feature type="chain" id="PRO_0000101510" description="Ribosomal RNA small subunit methyltransferase A">
    <location>
        <begin position="1"/>
        <end position="277"/>
    </location>
</feature>
<feature type="binding site" evidence="1">
    <location>
        <position position="27"/>
    </location>
    <ligand>
        <name>S-adenosyl-L-methionine</name>
        <dbReference type="ChEBI" id="CHEBI:59789"/>
    </ligand>
</feature>
<feature type="binding site" evidence="1">
    <location>
        <position position="29"/>
    </location>
    <ligand>
        <name>S-adenosyl-L-methionine</name>
        <dbReference type="ChEBI" id="CHEBI:59789"/>
    </ligand>
</feature>
<feature type="binding site" evidence="1">
    <location>
        <position position="54"/>
    </location>
    <ligand>
        <name>S-adenosyl-L-methionine</name>
        <dbReference type="ChEBI" id="CHEBI:59789"/>
    </ligand>
</feature>
<feature type="binding site" evidence="1">
    <location>
        <position position="75"/>
    </location>
    <ligand>
        <name>S-adenosyl-L-methionine</name>
        <dbReference type="ChEBI" id="CHEBI:59789"/>
    </ligand>
</feature>
<feature type="binding site" evidence="1">
    <location>
        <position position="95"/>
    </location>
    <ligand>
        <name>S-adenosyl-L-methionine</name>
        <dbReference type="ChEBI" id="CHEBI:59789"/>
    </ligand>
</feature>
<feature type="binding site" evidence="1">
    <location>
        <position position="118"/>
    </location>
    <ligand>
        <name>S-adenosyl-L-methionine</name>
        <dbReference type="ChEBI" id="CHEBI:59789"/>
    </ligand>
</feature>
<organism>
    <name type="scientific">Chlamydia muridarum (strain MoPn / Nigg)</name>
    <dbReference type="NCBI Taxonomy" id="243161"/>
    <lineage>
        <taxon>Bacteria</taxon>
        <taxon>Pseudomonadati</taxon>
        <taxon>Chlamydiota</taxon>
        <taxon>Chlamydiia</taxon>
        <taxon>Chlamydiales</taxon>
        <taxon>Chlamydiaceae</taxon>
        <taxon>Chlamydia/Chlamydophila group</taxon>
        <taxon>Chlamydia</taxon>
    </lineage>
</organism>
<proteinExistence type="inferred from homology"/>
<sequence>MARSSIEQLTSFLKSVNGRAKKALSQNFLVDGNILRKILATADVQPGDWVLEIGPGFGALSEVLVSQGANVIALEKDPMFEESLSQLPIDIEITDACKYPLASLDDKGWKGKGRIVANLPYHITTPLLTKFFLECPNRWKTVTVMIQDEVARRITANPGDKDYSSLTVFLRFFADVQYAFKVSPNCFYPKPSVSSAVVHMRVHEDFPLSGSEIDEFFALTRAAFGQRRKLLANSLKNLYPKDKVFQVLEHLGFSEKTRPETISLEEYLKIFRLLKDF</sequence>